<protein>
    <recommendedName>
        <fullName evidence="3">Large ribosomal subunit protein uL2</fullName>
    </recommendedName>
    <alternativeName>
        <fullName>60S ribosomal protein L8</fullName>
    </alternativeName>
</protein>
<proteinExistence type="evidence at protein level"/>
<sequence length="256" mass="27893">MGRVIRAQRKGAGSVFKAHVKKRKGAAKLRSLDFAERSGYIRGVVKDIIHDPGRGAPLAVVHFRDPYRYKIRKELFIAPEGMHTGQFVYCGRKATLQIGNVMPLSQMPEGTIICNLEEKTGDRGRLARTSGNYATVIAHNQDTKKTRVKLPSGAKKVVPSANRAMVGIVAGGGRIDKPILKAGRAYHKYKVKRNSWPKVRGVAMNPVEHPHGGGNHQHIGKASTVKRGTSAGRKVGLIAARRTGRIRGGKGDSKDK</sequence>
<reference key="1">
    <citation type="journal article" date="1999" name="Insect Biochem. Mol. Biol.">
        <title>The Drosophila homologue of ribosomal protein L8.</title>
        <authorList>
            <person name="Ruhf M.L."/>
            <person name="Meister M."/>
        </authorList>
    </citation>
    <scope>NUCLEOTIDE SEQUENCE [GENOMIC DNA]</scope>
    <scope>TISSUE SPECIFICITY</scope>
    <scope>DEVELOPMENTAL STAGE</scope>
    <source>
        <strain>Oregon-R</strain>
    </source>
</reference>
<reference key="2">
    <citation type="journal article" date="2000" name="Science">
        <title>The genome sequence of Drosophila melanogaster.</title>
        <authorList>
            <person name="Adams M.D."/>
            <person name="Celniker S.E."/>
            <person name="Holt R.A."/>
            <person name="Evans C.A."/>
            <person name="Gocayne J.D."/>
            <person name="Amanatides P.G."/>
            <person name="Scherer S.E."/>
            <person name="Li P.W."/>
            <person name="Hoskins R.A."/>
            <person name="Galle R.F."/>
            <person name="George R.A."/>
            <person name="Lewis S.E."/>
            <person name="Richards S."/>
            <person name="Ashburner M."/>
            <person name="Henderson S.N."/>
            <person name="Sutton G.G."/>
            <person name="Wortman J.R."/>
            <person name="Yandell M.D."/>
            <person name="Zhang Q."/>
            <person name="Chen L.X."/>
            <person name="Brandon R.C."/>
            <person name="Rogers Y.-H.C."/>
            <person name="Blazej R.G."/>
            <person name="Champe M."/>
            <person name="Pfeiffer B.D."/>
            <person name="Wan K.H."/>
            <person name="Doyle C."/>
            <person name="Baxter E.G."/>
            <person name="Helt G."/>
            <person name="Nelson C.R."/>
            <person name="Miklos G.L.G."/>
            <person name="Abril J.F."/>
            <person name="Agbayani A."/>
            <person name="An H.-J."/>
            <person name="Andrews-Pfannkoch C."/>
            <person name="Baldwin D."/>
            <person name="Ballew R.M."/>
            <person name="Basu A."/>
            <person name="Baxendale J."/>
            <person name="Bayraktaroglu L."/>
            <person name="Beasley E.M."/>
            <person name="Beeson K.Y."/>
            <person name="Benos P.V."/>
            <person name="Berman B.P."/>
            <person name="Bhandari D."/>
            <person name="Bolshakov S."/>
            <person name="Borkova D."/>
            <person name="Botchan M.R."/>
            <person name="Bouck J."/>
            <person name="Brokstein P."/>
            <person name="Brottier P."/>
            <person name="Burtis K.C."/>
            <person name="Busam D.A."/>
            <person name="Butler H."/>
            <person name="Cadieu E."/>
            <person name="Center A."/>
            <person name="Chandra I."/>
            <person name="Cherry J.M."/>
            <person name="Cawley S."/>
            <person name="Dahlke C."/>
            <person name="Davenport L.B."/>
            <person name="Davies P."/>
            <person name="de Pablos B."/>
            <person name="Delcher A."/>
            <person name="Deng Z."/>
            <person name="Mays A.D."/>
            <person name="Dew I."/>
            <person name="Dietz S.M."/>
            <person name="Dodson K."/>
            <person name="Doup L.E."/>
            <person name="Downes M."/>
            <person name="Dugan-Rocha S."/>
            <person name="Dunkov B.C."/>
            <person name="Dunn P."/>
            <person name="Durbin K.J."/>
            <person name="Evangelista C.C."/>
            <person name="Ferraz C."/>
            <person name="Ferriera S."/>
            <person name="Fleischmann W."/>
            <person name="Fosler C."/>
            <person name="Gabrielian A.E."/>
            <person name="Garg N.S."/>
            <person name="Gelbart W.M."/>
            <person name="Glasser K."/>
            <person name="Glodek A."/>
            <person name="Gong F."/>
            <person name="Gorrell J.H."/>
            <person name="Gu Z."/>
            <person name="Guan P."/>
            <person name="Harris M."/>
            <person name="Harris N.L."/>
            <person name="Harvey D.A."/>
            <person name="Heiman T.J."/>
            <person name="Hernandez J.R."/>
            <person name="Houck J."/>
            <person name="Hostin D."/>
            <person name="Houston K.A."/>
            <person name="Howland T.J."/>
            <person name="Wei M.-H."/>
            <person name="Ibegwam C."/>
            <person name="Jalali M."/>
            <person name="Kalush F."/>
            <person name="Karpen G.H."/>
            <person name="Ke Z."/>
            <person name="Kennison J.A."/>
            <person name="Ketchum K.A."/>
            <person name="Kimmel B.E."/>
            <person name="Kodira C.D."/>
            <person name="Kraft C.L."/>
            <person name="Kravitz S."/>
            <person name="Kulp D."/>
            <person name="Lai Z."/>
            <person name="Lasko P."/>
            <person name="Lei Y."/>
            <person name="Levitsky A.A."/>
            <person name="Li J.H."/>
            <person name="Li Z."/>
            <person name="Liang Y."/>
            <person name="Lin X."/>
            <person name="Liu X."/>
            <person name="Mattei B."/>
            <person name="McIntosh T.C."/>
            <person name="McLeod M.P."/>
            <person name="McPherson D."/>
            <person name="Merkulov G."/>
            <person name="Milshina N.V."/>
            <person name="Mobarry C."/>
            <person name="Morris J."/>
            <person name="Moshrefi A."/>
            <person name="Mount S.M."/>
            <person name="Moy M."/>
            <person name="Murphy B."/>
            <person name="Murphy L."/>
            <person name="Muzny D.M."/>
            <person name="Nelson D.L."/>
            <person name="Nelson D.R."/>
            <person name="Nelson K.A."/>
            <person name="Nixon K."/>
            <person name="Nusskern D.R."/>
            <person name="Pacleb J.M."/>
            <person name="Palazzolo M."/>
            <person name="Pittman G.S."/>
            <person name="Pan S."/>
            <person name="Pollard J."/>
            <person name="Puri V."/>
            <person name="Reese M.G."/>
            <person name="Reinert K."/>
            <person name="Remington K."/>
            <person name="Saunders R.D.C."/>
            <person name="Scheeler F."/>
            <person name="Shen H."/>
            <person name="Shue B.C."/>
            <person name="Siden-Kiamos I."/>
            <person name="Simpson M."/>
            <person name="Skupski M.P."/>
            <person name="Smith T.J."/>
            <person name="Spier E."/>
            <person name="Spradling A.C."/>
            <person name="Stapleton M."/>
            <person name="Strong R."/>
            <person name="Sun E."/>
            <person name="Svirskas R."/>
            <person name="Tector C."/>
            <person name="Turner R."/>
            <person name="Venter E."/>
            <person name="Wang A.H."/>
            <person name="Wang X."/>
            <person name="Wang Z.-Y."/>
            <person name="Wassarman D.A."/>
            <person name="Weinstock G.M."/>
            <person name="Weissenbach J."/>
            <person name="Williams S.M."/>
            <person name="Woodage T."/>
            <person name="Worley K.C."/>
            <person name="Wu D."/>
            <person name="Yang S."/>
            <person name="Yao Q.A."/>
            <person name="Ye J."/>
            <person name="Yeh R.-F."/>
            <person name="Zaveri J.S."/>
            <person name="Zhan M."/>
            <person name="Zhang G."/>
            <person name="Zhao Q."/>
            <person name="Zheng L."/>
            <person name="Zheng X.H."/>
            <person name="Zhong F.N."/>
            <person name="Zhong W."/>
            <person name="Zhou X."/>
            <person name="Zhu S.C."/>
            <person name="Zhu X."/>
            <person name="Smith H.O."/>
            <person name="Gibbs R.A."/>
            <person name="Myers E.W."/>
            <person name="Rubin G.M."/>
            <person name="Venter J.C."/>
        </authorList>
    </citation>
    <scope>NUCLEOTIDE SEQUENCE [LARGE SCALE GENOMIC DNA]</scope>
    <source>
        <strain>Berkeley</strain>
    </source>
</reference>
<reference key="3">
    <citation type="journal article" date="2002" name="Genome Biol.">
        <title>Annotation of the Drosophila melanogaster euchromatic genome: a systematic review.</title>
        <authorList>
            <person name="Misra S."/>
            <person name="Crosby M.A."/>
            <person name="Mungall C.J."/>
            <person name="Matthews B.B."/>
            <person name="Campbell K.S."/>
            <person name="Hradecky P."/>
            <person name="Huang Y."/>
            <person name="Kaminker J.S."/>
            <person name="Millburn G.H."/>
            <person name="Prochnik S.E."/>
            <person name="Smith C.D."/>
            <person name="Tupy J.L."/>
            <person name="Whitfield E.J."/>
            <person name="Bayraktaroglu L."/>
            <person name="Berman B.P."/>
            <person name="Bettencourt B.R."/>
            <person name="Celniker S.E."/>
            <person name="de Grey A.D.N.J."/>
            <person name="Drysdale R.A."/>
            <person name="Harris N.L."/>
            <person name="Richter J."/>
            <person name="Russo S."/>
            <person name="Schroeder A.J."/>
            <person name="Shu S.Q."/>
            <person name="Stapleton M."/>
            <person name="Yamada C."/>
            <person name="Ashburner M."/>
            <person name="Gelbart W.M."/>
            <person name="Rubin G.M."/>
            <person name="Lewis S.E."/>
        </authorList>
    </citation>
    <scope>GENOME REANNOTATION</scope>
    <source>
        <strain>Berkeley</strain>
    </source>
</reference>
<reference key="4">
    <citation type="journal article" date="2002" name="Genome Biol.">
        <title>A Drosophila full-length cDNA resource.</title>
        <authorList>
            <person name="Stapleton M."/>
            <person name="Carlson J.W."/>
            <person name="Brokstein P."/>
            <person name="Yu C."/>
            <person name="Champe M."/>
            <person name="George R.A."/>
            <person name="Guarin H."/>
            <person name="Kronmiller B."/>
            <person name="Pacleb J.M."/>
            <person name="Park S."/>
            <person name="Wan K.H."/>
            <person name="Rubin G.M."/>
            <person name="Celniker S.E."/>
        </authorList>
    </citation>
    <scope>NUCLEOTIDE SEQUENCE [LARGE SCALE MRNA]</scope>
    <source>
        <strain>Berkeley</strain>
        <tissue>Embryo</tissue>
    </source>
</reference>
<reference key="5">
    <citation type="submission" date="2004-06" db="EMBL/GenBank/DDBJ databases">
        <authorList>
            <person name="Stapleton M."/>
            <person name="Carlson J.W."/>
            <person name="Chavez C."/>
            <person name="Frise E."/>
            <person name="George R.A."/>
            <person name="Pacleb J.M."/>
            <person name="Park S."/>
            <person name="Wan K.H."/>
            <person name="Yu C."/>
            <person name="Rubin G.M."/>
            <person name="Celniker S.E."/>
        </authorList>
    </citation>
    <scope>NUCLEOTIDE SEQUENCE [LARGE SCALE MRNA]</scope>
    <source>
        <strain>Berkeley</strain>
        <tissue>Head</tissue>
    </source>
</reference>
<reference key="6">
    <citation type="journal article" date="2013" name="Nature">
        <title>Structures of the human and Drosophila 80S ribosome.</title>
        <authorList>
            <person name="Anger A.M."/>
            <person name="Armache J.P."/>
            <person name="Berninghausen O."/>
            <person name="Habeck M."/>
            <person name="Subklewe M."/>
            <person name="Wilson D.N."/>
            <person name="Beckmann R."/>
        </authorList>
    </citation>
    <scope>STRUCTURE BY ELECTRON MICROSCOPY (6.0 ANGSTROMS) OF THE 80S RIBOSOME</scope>
</reference>
<organism>
    <name type="scientific">Drosophila melanogaster</name>
    <name type="common">Fruit fly</name>
    <dbReference type="NCBI Taxonomy" id="7227"/>
    <lineage>
        <taxon>Eukaryota</taxon>
        <taxon>Metazoa</taxon>
        <taxon>Ecdysozoa</taxon>
        <taxon>Arthropoda</taxon>
        <taxon>Hexapoda</taxon>
        <taxon>Insecta</taxon>
        <taxon>Pterygota</taxon>
        <taxon>Neoptera</taxon>
        <taxon>Endopterygota</taxon>
        <taxon>Diptera</taxon>
        <taxon>Brachycera</taxon>
        <taxon>Muscomorpha</taxon>
        <taxon>Ephydroidea</taxon>
        <taxon>Drosophilidae</taxon>
        <taxon>Drosophila</taxon>
        <taxon>Sophophora</taxon>
    </lineage>
</organism>
<keyword id="KW-0002">3D-structure</keyword>
<keyword id="KW-0963">Cytoplasm</keyword>
<keyword id="KW-1185">Reference proteome</keyword>
<keyword id="KW-0687">Ribonucleoprotein</keyword>
<keyword id="KW-0689">Ribosomal protein</keyword>
<keyword id="KW-0694">RNA-binding</keyword>
<keyword id="KW-0699">rRNA-binding</keyword>
<feature type="chain" id="PRO_0000129754" description="Large ribosomal subunit protein uL2">
    <location>
        <begin position="1"/>
        <end position="256"/>
    </location>
</feature>
<feature type="region of interest" description="Disordered" evidence="1">
    <location>
        <begin position="208"/>
        <end position="230"/>
    </location>
</feature>
<accession>Q9V3G1</accession>
<accession>A4V1C0</accession>
<gene>
    <name type="primary">RpL8</name>
    <name type="ORF">CG1263</name>
</gene>
<dbReference type="EMBL" id="AF098520">
    <property type="protein sequence ID" value="AAF06828.1"/>
    <property type="molecule type" value="Genomic_DNA"/>
</dbReference>
<dbReference type="EMBL" id="AE014296">
    <property type="protein sequence ID" value="AAF47659.1"/>
    <property type="molecule type" value="Genomic_DNA"/>
</dbReference>
<dbReference type="EMBL" id="AE014296">
    <property type="protein sequence ID" value="AAF47660.1"/>
    <property type="molecule type" value="Genomic_DNA"/>
</dbReference>
<dbReference type="EMBL" id="AY071342">
    <property type="protein sequence ID" value="AAL48964.1"/>
    <property type="molecule type" value="mRNA"/>
</dbReference>
<dbReference type="EMBL" id="BT014913">
    <property type="protein sequence ID" value="AAT47764.1"/>
    <property type="molecule type" value="mRNA"/>
</dbReference>
<dbReference type="RefSeq" id="NP_524726.1">
    <property type="nucleotide sequence ID" value="NM_079987.3"/>
</dbReference>
<dbReference type="RefSeq" id="NP_728756.1">
    <property type="nucleotide sequence ID" value="NM_167955.2"/>
</dbReference>
<dbReference type="PDB" id="4V6W">
    <property type="method" value="EM"/>
    <property type="resolution" value="6.00 A"/>
    <property type="chains" value="CA=1-256"/>
</dbReference>
<dbReference type="PDB" id="6XU6">
    <property type="method" value="EM"/>
    <property type="resolution" value="3.50 A"/>
    <property type="chains" value="CA=1-253"/>
</dbReference>
<dbReference type="PDB" id="6XU7">
    <property type="method" value="EM"/>
    <property type="resolution" value="4.90 A"/>
    <property type="chains" value="CA=1-253"/>
</dbReference>
<dbReference type="PDB" id="6XU8">
    <property type="method" value="EM"/>
    <property type="resolution" value="3.00 A"/>
    <property type="chains" value="CA=1-253"/>
</dbReference>
<dbReference type="PDBsum" id="4V6W"/>
<dbReference type="PDBsum" id="6XU6"/>
<dbReference type="PDBsum" id="6XU7"/>
<dbReference type="PDBsum" id="6XU8"/>
<dbReference type="EMDB" id="EMD-10622"/>
<dbReference type="EMDB" id="EMD-10623"/>
<dbReference type="EMDB" id="EMD-10624"/>
<dbReference type="SMR" id="Q9V3G1"/>
<dbReference type="BioGRID" id="68919">
    <property type="interactions" value="109"/>
</dbReference>
<dbReference type="FunCoup" id="Q9V3G1">
    <property type="interactions" value="1138"/>
</dbReference>
<dbReference type="STRING" id="7227.FBpp0072802"/>
<dbReference type="SwissPalm" id="Q9V3G1"/>
<dbReference type="PaxDb" id="7227-FBpp0072801"/>
<dbReference type="DNASU" id="44251"/>
<dbReference type="EnsemblMetazoa" id="FBtr0072924">
    <property type="protein sequence ID" value="FBpp0072801"/>
    <property type="gene ID" value="FBgn0261602"/>
</dbReference>
<dbReference type="EnsemblMetazoa" id="FBtr0072925">
    <property type="protein sequence ID" value="FBpp0072802"/>
    <property type="gene ID" value="FBgn0261602"/>
</dbReference>
<dbReference type="GeneID" id="44251"/>
<dbReference type="KEGG" id="dme:Dmel_CG1263"/>
<dbReference type="AGR" id="FB:FBgn0261602"/>
<dbReference type="CTD" id="6132"/>
<dbReference type="FlyBase" id="FBgn0261602">
    <property type="gene designation" value="RpL8"/>
</dbReference>
<dbReference type="VEuPathDB" id="VectorBase:FBgn0261602"/>
<dbReference type="eggNOG" id="KOG2309">
    <property type="taxonomic scope" value="Eukaryota"/>
</dbReference>
<dbReference type="GeneTree" id="ENSGT00940000153244"/>
<dbReference type="HOGENOM" id="CLU_036235_0_3_1"/>
<dbReference type="InParanoid" id="Q9V3G1"/>
<dbReference type="OMA" id="GGRHPCT"/>
<dbReference type="OrthoDB" id="10267824at2759"/>
<dbReference type="PhylomeDB" id="Q9V3G1"/>
<dbReference type="Reactome" id="R-DME-156827">
    <property type="pathway name" value="L13a-mediated translational silencing of Ceruloplasmin expression"/>
</dbReference>
<dbReference type="Reactome" id="R-DME-1799339">
    <property type="pathway name" value="SRP-dependent cotranslational protein targeting to membrane"/>
</dbReference>
<dbReference type="Reactome" id="R-DME-72689">
    <property type="pathway name" value="Formation of a pool of free 40S subunits"/>
</dbReference>
<dbReference type="Reactome" id="R-DME-72706">
    <property type="pathway name" value="GTP hydrolysis and joining of the 60S ribosomal subunit"/>
</dbReference>
<dbReference type="Reactome" id="R-DME-9629569">
    <property type="pathway name" value="Protein hydroxylation"/>
</dbReference>
<dbReference type="Reactome" id="R-DME-975956">
    <property type="pathway name" value="Nonsense Mediated Decay (NMD) independent of the Exon Junction Complex (EJC)"/>
</dbReference>
<dbReference type="Reactome" id="R-DME-975957">
    <property type="pathway name" value="Nonsense Mediated Decay (NMD) enhanced by the Exon Junction Complex (EJC)"/>
</dbReference>
<dbReference type="BioGRID-ORCS" id="44251">
    <property type="hits" value="1 hit in 1 CRISPR screen"/>
</dbReference>
<dbReference type="ChiTaRS" id="RpL8">
    <property type="organism name" value="fly"/>
</dbReference>
<dbReference type="GenomeRNAi" id="44251"/>
<dbReference type="PRO" id="PR:Q9V3G1"/>
<dbReference type="Proteomes" id="UP000000803">
    <property type="component" value="Chromosome 3L"/>
</dbReference>
<dbReference type="Bgee" id="FBgn0261602">
    <property type="expression patterns" value="Expressed in adult tracheocyte (Drosophila) in ovary and 276 other cell types or tissues"/>
</dbReference>
<dbReference type="GO" id="GO:0005737">
    <property type="term" value="C:cytoplasm"/>
    <property type="evidence" value="ECO:0000314"/>
    <property type="project" value="FlyBase"/>
</dbReference>
<dbReference type="GO" id="GO:0022625">
    <property type="term" value="C:cytosolic large ribosomal subunit"/>
    <property type="evidence" value="ECO:0000318"/>
    <property type="project" value="GO_Central"/>
</dbReference>
<dbReference type="GO" id="GO:0022626">
    <property type="term" value="C:cytosolic ribosome"/>
    <property type="evidence" value="ECO:0000314"/>
    <property type="project" value="FlyBase"/>
</dbReference>
<dbReference type="GO" id="GO:0005730">
    <property type="term" value="C:nucleolus"/>
    <property type="evidence" value="ECO:0000314"/>
    <property type="project" value="FlyBase"/>
</dbReference>
<dbReference type="GO" id="GO:0003723">
    <property type="term" value="F:RNA binding"/>
    <property type="evidence" value="ECO:0000318"/>
    <property type="project" value="GO_Central"/>
</dbReference>
<dbReference type="GO" id="GO:0019843">
    <property type="term" value="F:rRNA binding"/>
    <property type="evidence" value="ECO:0007669"/>
    <property type="project" value="UniProtKB-KW"/>
</dbReference>
<dbReference type="GO" id="GO:0003735">
    <property type="term" value="F:structural constituent of ribosome"/>
    <property type="evidence" value="ECO:0000314"/>
    <property type="project" value="FlyBase"/>
</dbReference>
<dbReference type="GO" id="GO:0002181">
    <property type="term" value="P:cytoplasmic translation"/>
    <property type="evidence" value="ECO:0000318"/>
    <property type="project" value="GO_Central"/>
</dbReference>
<dbReference type="FunFam" id="2.40.50.140:FF:000020">
    <property type="entry name" value="60S ribosomal protein L2"/>
    <property type="match status" value="1"/>
</dbReference>
<dbReference type="FunFam" id="4.10.950.10:FF:000002">
    <property type="entry name" value="60S ribosomal protein L2"/>
    <property type="match status" value="1"/>
</dbReference>
<dbReference type="FunFam" id="2.30.30.30:FF:000006">
    <property type="entry name" value="60S ribosomal protein L8"/>
    <property type="match status" value="1"/>
</dbReference>
<dbReference type="Gene3D" id="2.30.30.30">
    <property type="match status" value="1"/>
</dbReference>
<dbReference type="Gene3D" id="2.40.50.140">
    <property type="entry name" value="Nucleic acid-binding proteins"/>
    <property type="match status" value="1"/>
</dbReference>
<dbReference type="Gene3D" id="4.10.950.10">
    <property type="entry name" value="Ribosomal protein L2, domain 3"/>
    <property type="match status" value="1"/>
</dbReference>
<dbReference type="InterPro" id="IPR012340">
    <property type="entry name" value="NA-bd_OB-fold"/>
</dbReference>
<dbReference type="InterPro" id="IPR014722">
    <property type="entry name" value="Rib_uL2_dom2"/>
</dbReference>
<dbReference type="InterPro" id="IPR002171">
    <property type="entry name" value="Ribosomal_uL2"/>
</dbReference>
<dbReference type="InterPro" id="IPR023672">
    <property type="entry name" value="Ribosomal_uL2_arc_euk"/>
</dbReference>
<dbReference type="InterPro" id="IPR022669">
    <property type="entry name" value="Ribosomal_uL2_C"/>
</dbReference>
<dbReference type="InterPro" id="IPR022671">
    <property type="entry name" value="Ribosomal_uL2_CS"/>
</dbReference>
<dbReference type="InterPro" id="IPR014726">
    <property type="entry name" value="Ribosomal_uL2_dom3"/>
</dbReference>
<dbReference type="InterPro" id="IPR022666">
    <property type="entry name" value="Ribosomal_uL2_RNA-bd_dom"/>
</dbReference>
<dbReference type="InterPro" id="IPR008991">
    <property type="entry name" value="Translation_prot_SH3-like_sf"/>
</dbReference>
<dbReference type="NCBIfam" id="NF007180">
    <property type="entry name" value="PRK09612.1"/>
    <property type="match status" value="1"/>
</dbReference>
<dbReference type="PANTHER" id="PTHR13691:SF16">
    <property type="entry name" value="LARGE RIBOSOMAL SUBUNIT PROTEIN UL2"/>
    <property type="match status" value="1"/>
</dbReference>
<dbReference type="PANTHER" id="PTHR13691">
    <property type="entry name" value="RIBOSOMAL PROTEIN L2"/>
    <property type="match status" value="1"/>
</dbReference>
<dbReference type="Pfam" id="PF00181">
    <property type="entry name" value="Ribosomal_L2"/>
    <property type="match status" value="1"/>
</dbReference>
<dbReference type="Pfam" id="PF03947">
    <property type="entry name" value="Ribosomal_L2_C"/>
    <property type="match status" value="1"/>
</dbReference>
<dbReference type="PIRSF" id="PIRSF002158">
    <property type="entry name" value="Ribosomal_L2"/>
    <property type="match status" value="1"/>
</dbReference>
<dbReference type="SMART" id="SM01383">
    <property type="entry name" value="Ribosomal_L2"/>
    <property type="match status" value="1"/>
</dbReference>
<dbReference type="SMART" id="SM01382">
    <property type="entry name" value="Ribosomal_L2_C"/>
    <property type="match status" value="1"/>
</dbReference>
<dbReference type="SUPFAM" id="SSF50249">
    <property type="entry name" value="Nucleic acid-binding proteins"/>
    <property type="match status" value="1"/>
</dbReference>
<dbReference type="SUPFAM" id="SSF50104">
    <property type="entry name" value="Translation proteins SH3-like domain"/>
    <property type="match status" value="1"/>
</dbReference>
<dbReference type="PROSITE" id="PS00467">
    <property type="entry name" value="RIBOSOMAL_L2"/>
    <property type="match status" value="1"/>
</dbReference>
<name>RL8_DROME</name>
<evidence type="ECO:0000256" key="1">
    <source>
        <dbReference type="SAM" id="MobiDB-lite"/>
    </source>
</evidence>
<evidence type="ECO:0000269" key="2">
    <source>
    </source>
</evidence>
<evidence type="ECO:0000305" key="3"/>
<comment type="subcellular location">
    <subcellularLocation>
        <location>Cytoplasm</location>
    </subcellularLocation>
</comment>
<comment type="tissue specificity">
    <text evidence="2">In larvae tissues examined: gut, brain imaginal disk, salivary glands, fat body, muscles, epidermis and trachaea.</text>
</comment>
<comment type="developmental stage">
    <text evidence="2">Expressed both maternally and zygotically in all stages.</text>
</comment>
<comment type="similarity">
    <text evidence="3">Belongs to the universal ribosomal protein uL2 family.</text>
</comment>